<feature type="chain" id="PRO_0000052783" description="Hemoglobin subunit alpha">
    <location>
        <begin position="1"/>
        <end position="143"/>
    </location>
</feature>
<feature type="domain" description="Globin" evidence="1">
    <location>
        <begin position="2"/>
        <end position="143"/>
    </location>
</feature>
<feature type="binding site" evidence="1">
    <location>
        <position position="60"/>
    </location>
    <ligand>
        <name>O2</name>
        <dbReference type="ChEBI" id="CHEBI:15379"/>
    </ligand>
</feature>
<feature type="binding site" description="proximal binding residue" evidence="1">
    <location>
        <position position="89"/>
    </location>
    <ligand>
        <name>heme b</name>
        <dbReference type="ChEBI" id="CHEBI:60344"/>
    </ligand>
    <ligandPart>
        <name>Fe</name>
        <dbReference type="ChEBI" id="CHEBI:18248"/>
    </ligandPart>
</feature>
<comment type="function">
    <text>Involved in oxygen transport from gills to the various peripheral tissues.</text>
</comment>
<comment type="subunit">
    <text>Heterotetramer of two alpha chains and two beta chains.</text>
</comment>
<comment type="tissue specificity">
    <text>Red blood cells.</text>
</comment>
<comment type="similarity">
    <text evidence="1">Belongs to the globin family.</text>
</comment>
<keyword id="KW-0903">Direct protein sequencing</keyword>
<keyword id="KW-0349">Heme</keyword>
<keyword id="KW-0408">Iron</keyword>
<keyword id="KW-0479">Metal-binding</keyword>
<keyword id="KW-0561">Oxygen transport</keyword>
<keyword id="KW-0813">Transport</keyword>
<sequence>TTLSDKDKSTVKALWGKISKSADAIGADALGRMLAVYPQTKTYFSHWPDMSPGSGPVKAHGKKVMGGVALAVTKIDDLTTGLGDLSELHAFKMRVDPSNFKILSHCILVVVAKMFPKEFTPDAHVSLDKFLASVALALAERYR</sequence>
<accession>P11748</accession>
<dbReference type="PIR" id="A29701">
    <property type="entry name" value="A29701"/>
</dbReference>
<dbReference type="SMR" id="P11748"/>
<dbReference type="GO" id="GO:0072562">
    <property type="term" value="C:blood microparticle"/>
    <property type="evidence" value="ECO:0007669"/>
    <property type="project" value="TreeGrafter"/>
</dbReference>
<dbReference type="GO" id="GO:0031838">
    <property type="term" value="C:haptoglobin-hemoglobin complex"/>
    <property type="evidence" value="ECO:0007669"/>
    <property type="project" value="TreeGrafter"/>
</dbReference>
<dbReference type="GO" id="GO:0005833">
    <property type="term" value="C:hemoglobin complex"/>
    <property type="evidence" value="ECO:0007669"/>
    <property type="project" value="InterPro"/>
</dbReference>
<dbReference type="GO" id="GO:0031720">
    <property type="term" value="F:haptoglobin binding"/>
    <property type="evidence" value="ECO:0007669"/>
    <property type="project" value="TreeGrafter"/>
</dbReference>
<dbReference type="GO" id="GO:0020037">
    <property type="term" value="F:heme binding"/>
    <property type="evidence" value="ECO:0007669"/>
    <property type="project" value="InterPro"/>
</dbReference>
<dbReference type="GO" id="GO:0005506">
    <property type="term" value="F:iron ion binding"/>
    <property type="evidence" value="ECO:0007669"/>
    <property type="project" value="InterPro"/>
</dbReference>
<dbReference type="GO" id="GO:0043177">
    <property type="term" value="F:organic acid binding"/>
    <property type="evidence" value="ECO:0007669"/>
    <property type="project" value="TreeGrafter"/>
</dbReference>
<dbReference type="GO" id="GO:0019825">
    <property type="term" value="F:oxygen binding"/>
    <property type="evidence" value="ECO:0007669"/>
    <property type="project" value="InterPro"/>
</dbReference>
<dbReference type="GO" id="GO:0005344">
    <property type="term" value="F:oxygen carrier activity"/>
    <property type="evidence" value="ECO:0007669"/>
    <property type="project" value="UniProtKB-KW"/>
</dbReference>
<dbReference type="GO" id="GO:0004601">
    <property type="term" value="F:peroxidase activity"/>
    <property type="evidence" value="ECO:0007669"/>
    <property type="project" value="TreeGrafter"/>
</dbReference>
<dbReference type="GO" id="GO:0042744">
    <property type="term" value="P:hydrogen peroxide catabolic process"/>
    <property type="evidence" value="ECO:0007669"/>
    <property type="project" value="TreeGrafter"/>
</dbReference>
<dbReference type="CDD" id="cd08927">
    <property type="entry name" value="Hb-alpha-like"/>
    <property type="match status" value="1"/>
</dbReference>
<dbReference type="FunFam" id="1.10.490.10:FF:000002">
    <property type="entry name" value="Hemoglobin subunit alpha"/>
    <property type="match status" value="1"/>
</dbReference>
<dbReference type="Gene3D" id="1.10.490.10">
    <property type="entry name" value="Globins"/>
    <property type="match status" value="1"/>
</dbReference>
<dbReference type="InterPro" id="IPR000971">
    <property type="entry name" value="Globin"/>
</dbReference>
<dbReference type="InterPro" id="IPR009050">
    <property type="entry name" value="Globin-like_sf"/>
</dbReference>
<dbReference type="InterPro" id="IPR012292">
    <property type="entry name" value="Globin/Proto"/>
</dbReference>
<dbReference type="InterPro" id="IPR002338">
    <property type="entry name" value="Hemoglobin_a-typ"/>
</dbReference>
<dbReference type="InterPro" id="IPR050056">
    <property type="entry name" value="Hemoglobin_oxygen_transport"/>
</dbReference>
<dbReference type="InterPro" id="IPR002339">
    <property type="entry name" value="Hemoglobin_pi"/>
</dbReference>
<dbReference type="PANTHER" id="PTHR11442">
    <property type="entry name" value="HEMOGLOBIN FAMILY MEMBER"/>
    <property type="match status" value="1"/>
</dbReference>
<dbReference type="PANTHER" id="PTHR11442:SF41">
    <property type="entry name" value="HEMOGLOBIN SUBUNIT ZETA"/>
    <property type="match status" value="1"/>
</dbReference>
<dbReference type="Pfam" id="PF00042">
    <property type="entry name" value="Globin"/>
    <property type="match status" value="1"/>
</dbReference>
<dbReference type="PRINTS" id="PR00612">
    <property type="entry name" value="ALPHAHAEM"/>
</dbReference>
<dbReference type="PRINTS" id="PR00815">
    <property type="entry name" value="PIHAEM"/>
</dbReference>
<dbReference type="SUPFAM" id="SSF46458">
    <property type="entry name" value="Globin-like"/>
    <property type="match status" value="1"/>
</dbReference>
<dbReference type="PROSITE" id="PS01033">
    <property type="entry name" value="GLOBIN"/>
    <property type="match status" value="1"/>
</dbReference>
<gene>
    <name type="primary">hba</name>
</gene>
<reference key="1">
    <citation type="journal article" date="1987" name="Biol. Chem. Hoppe-Seyler">
        <title>Homeothermic fish and hemoglobin: primary structure of the hemoglobin from bluefin tuna (Thunnus thynnus, Scromboidei).</title>
        <authorList>
            <person name="Rodewald K."/>
            <person name="Oberthur W."/>
            <person name="Braunitzer G."/>
        </authorList>
    </citation>
    <scope>PROTEIN SEQUENCE</scope>
</reference>
<proteinExistence type="evidence at protein level"/>
<name>HBA_THUTH</name>
<protein>
    <recommendedName>
        <fullName>Hemoglobin subunit alpha</fullName>
    </recommendedName>
    <alternativeName>
        <fullName>Alpha-globin</fullName>
    </alternativeName>
    <alternativeName>
        <fullName>Hemoglobin alpha chain</fullName>
    </alternativeName>
</protein>
<evidence type="ECO:0000255" key="1">
    <source>
        <dbReference type="PROSITE-ProRule" id="PRU00238"/>
    </source>
</evidence>
<organism>
    <name type="scientific">Thunnus thynnus</name>
    <name type="common">Atlantic bluefin tuna</name>
    <name type="synonym">Scomber thynnus</name>
    <dbReference type="NCBI Taxonomy" id="8237"/>
    <lineage>
        <taxon>Eukaryota</taxon>
        <taxon>Metazoa</taxon>
        <taxon>Chordata</taxon>
        <taxon>Craniata</taxon>
        <taxon>Vertebrata</taxon>
        <taxon>Euteleostomi</taxon>
        <taxon>Actinopterygii</taxon>
        <taxon>Neopterygii</taxon>
        <taxon>Teleostei</taxon>
        <taxon>Neoteleostei</taxon>
        <taxon>Acanthomorphata</taxon>
        <taxon>Pelagiaria</taxon>
        <taxon>Scombriformes</taxon>
        <taxon>Scombridae</taxon>
        <taxon>Thunnus</taxon>
    </lineage>
</organism>